<accession>B1N016</accession>
<proteinExistence type="inferred from homology"/>
<name>RNC_LEUCK</name>
<keyword id="KW-0963">Cytoplasm</keyword>
<keyword id="KW-0255">Endonuclease</keyword>
<keyword id="KW-0378">Hydrolase</keyword>
<keyword id="KW-0460">Magnesium</keyword>
<keyword id="KW-0479">Metal-binding</keyword>
<keyword id="KW-0507">mRNA processing</keyword>
<keyword id="KW-0540">Nuclease</keyword>
<keyword id="KW-1185">Reference proteome</keyword>
<keyword id="KW-0694">RNA-binding</keyword>
<keyword id="KW-0698">rRNA processing</keyword>
<keyword id="KW-0699">rRNA-binding</keyword>
<keyword id="KW-0819">tRNA processing</keyword>
<feature type="chain" id="PRO_1000094119" description="Ribonuclease 3">
    <location>
        <begin position="1"/>
        <end position="233"/>
    </location>
</feature>
<feature type="domain" description="RNase III" evidence="1">
    <location>
        <begin position="7"/>
        <end position="136"/>
    </location>
</feature>
<feature type="domain" description="DRBM" evidence="1">
    <location>
        <begin position="162"/>
        <end position="232"/>
    </location>
</feature>
<feature type="active site" evidence="1">
    <location>
        <position position="53"/>
    </location>
</feature>
<feature type="active site" evidence="1">
    <location>
        <position position="125"/>
    </location>
</feature>
<feature type="binding site" evidence="1">
    <location>
        <position position="49"/>
    </location>
    <ligand>
        <name>Mg(2+)</name>
        <dbReference type="ChEBI" id="CHEBI:18420"/>
    </ligand>
</feature>
<feature type="binding site" evidence="1">
    <location>
        <position position="122"/>
    </location>
    <ligand>
        <name>Mg(2+)</name>
        <dbReference type="ChEBI" id="CHEBI:18420"/>
    </ligand>
</feature>
<feature type="binding site" evidence="1">
    <location>
        <position position="125"/>
    </location>
    <ligand>
        <name>Mg(2+)</name>
        <dbReference type="ChEBI" id="CHEBI:18420"/>
    </ligand>
</feature>
<organism>
    <name type="scientific">Leuconostoc citreum (strain KM20)</name>
    <dbReference type="NCBI Taxonomy" id="349519"/>
    <lineage>
        <taxon>Bacteria</taxon>
        <taxon>Bacillati</taxon>
        <taxon>Bacillota</taxon>
        <taxon>Bacilli</taxon>
        <taxon>Lactobacillales</taxon>
        <taxon>Lactobacillaceae</taxon>
        <taxon>Leuconostoc</taxon>
    </lineage>
</organism>
<dbReference type="EC" id="3.1.26.3" evidence="1"/>
<dbReference type="EMBL" id="DQ489736">
    <property type="protein sequence ID" value="ACA83118.1"/>
    <property type="molecule type" value="Genomic_DNA"/>
</dbReference>
<dbReference type="RefSeq" id="WP_004903552.1">
    <property type="nucleotide sequence ID" value="NC_010471.1"/>
</dbReference>
<dbReference type="SMR" id="B1N016"/>
<dbReference type="STRING" id="349519.LCK_01294"/>
<dbReference type="GeneID" id="61101694"/>
<dbReference type="KEGG" id="lci:LCK_01294"/>
<dbReference type="eggNOG" id="COG0571">
    <property type="taxonomic scope" value="Bacteria"/>
</dbReference>
<dbReference type="HOGENOM" id="CLU_000907_1_3_9"/>
<dbReference type="OrthoDB" id="9805026at2"/>
<dbReference type="Proteomes" id="UP000002166">
    <property type="component" value="Chromosome"/>
</dbReference>
<dbReference type="GO" id="GO:0005737">
    <property type="term" value="C:cytoplasm"/>
    <property type="evidence" value="ECO:0007669"/>
    <property type="project" value="UniProtKB-SubCell"/>
</dbReference>
<dbReference type="GO" id="GO:0003725">
    <property type="term" value="F:double-stranded RNA binding"/>
    <property type="evidence" value="ECO:0007669"/>
    <property type="project" value="TreeGrafter"/>
</dbReference>
<dbReference type="GO" id="GO:0046872">
    <property type="term" value="F:metal ion binding"/>
    <property type="evidence" value="ECO:0007669"/>
    <property type="project" value="UniProtKB-KW"/>
</dbReference>
<dbReference type="GO" id="GO:0004525">
    <property type="term" value="F:ribonuclease III activity"/>
    <property type="evidence" value="ECO:0007669"/>
    <property type="project" value="UniProtKB-UniRule"/>
</dbReference>
<dbReference type="GO" id="GO:0019843">
    <property type="term" value="F:rRNA binding"/>
    <property type="evidence" value="ECO:0007669"/>
    <property type="project" value="UniProtKB-KW"/>
</dbReference>
<dbReference type="GO" id="GO:0006397">
    <property type="term" value="P:mRNA processing"/>
    <property type="evidence" value="ECO:0007669"/>
    <property type="project" value="UniProtKB-UniRule"/>
</dbReference>
<dbReference type="GO" id="GO:0010468">
    <property type="term" value="P:regulation of gene expression"/>
    <property type="evidence" value="ECO:0007669"/>
    <property type="project" value="TreeGrafter"/>
</dbReference>
<dbReference type="GO" id="GO:0006364">
    <property type="term" value="P:rRNA processing"/>
    <property type="evidence" value="ECO:0007669"/>
    <property type="project" value="UniProtKB-UniRule"/>
</dbReference>
<dbReference type="GO" id="GO:0008033">
    <property type="term" value="P:tRNA processing"/>
    <property type="evidence" value="ECO:0007669"/>
    <property type="project" value="UniProtKB-KW"/>
</dbReference>
<dbReference type="CDD" id="cd10845">
    <property type="entry name" value="DSRM_RNAse_III_family"/>
    <property type="match status" value="1"/>
</dbReference>
<dbReference type="CDD" id="cd00593">
    <property type="entry name" value="RIBOc"/>
    <property type="match status" value="1"/>
</dbReference>
<dbReference type="FunFam" id="1.10.1520.10:FF:000001">
    <property type="entry name" value="Ribonuclease 3"/>
    <property type="match status" value="1"/>
</dbReference>
<dbReference type="Gene3D" id="3.30.160.20">
    <property type="match status" value="1"/>
</dbReference>
<dbReference type="Gene3D" id="1.10.1520.10">
    <property type="entry name" value="Ribonuclease III domain"/>
    <property type="match status" value="1"/>
</dbReference>
<dbReference type="HAMAP" id="MF_00104">
    <property type="entry name" value="RNase_III"/>
    <property type="match status" value="1"/>
</dbReference>
<dbReference type="InterPro" id="IPR014720">
    <property type="entry name" value="dsRBD_dom"/>
</dbReference>
<dbReference type="InterPro" id="IPR011907">
    <property type="entry name" value="RNase_III"/>
</dbReference>
<dbReference type="InterPro" id="IPR000999">
    <property type="entry name" value="RNase_III_dom"/>
</dbReference>
<dbReference type="InterPro" id="IPR036389">
    <property type="entry name" value="RNase_III_sf"/>
</dbReference>
<dbReference type="NCBIfam" id="TIGR02191">
    <property type="entry name" value="RNaseIII"/>
    <property type="match status" value="1"/>
</dbReference>
<dbReference type="PANTHER" id="PTHR11207:SF0">
    <property type="entry name" value="RIBONUCLEASE 3"/>
    <property type="match status" value="1"/>
</dbReference>
<dbReference type="PANTHER" id="PTHR11207">
    <property type="entry name" value="RIBONUCLEASE III"/>
    <property type="match status" value="1"/>
</dbReference>
<dbReference type="Pfam" id="PF00035">
    <property type="entry name" value="dsrm"/>
    <property type="match status" value="1"/>
</dbReference>
<dbReference type="Pfam" id="PF14622">
    <property type="entry name" value="Ribonucleas_3_3"/>
    <property type="match status" value="1"/>
</dbReference>
<dbReference type="SMART" id="SM00358">
    <property type="entry name" value="DSRM"/>
    <property type="match status" value="1"/>
</dbReference>
<dbReference type="SMART" id="SM00535">
    <property type="entry name" value="RIBOc"/>
    <property type="match status" value="1"/>
</dbReference>
<dbReference type="SUPFAM" id="SSF54768">
    <property type="entry name" value="dsRNA-binding domain-like"/>
    <property type="match status" value="1"/>
</dbReference>
<dbReference type="SUPFAM" id="SSF69065">
    <property type="entry name" value="RNase III domain-like"/>
    <property type="match status" value="1"/>
</dbReference>
<dbReference type="PROSITE" id="PS50137">
    <property type="entry name" value="DS_RBD"/>
    <property type="match status" value="1"/>
</dbReference>
<dbReference type="PROSITE" id="PS00517">
    <property type="entry name" value="RNASE_3_1"/>
    <property type="match status" value="1"/>
</dbReference>
<dbReference type="PROSITE" id="PS50142">
    <property type="entry name" value="RNASE_3_2"/>
    <property type="match status" value="1"/>
</dbReference>
<reference key="1">
    <citation type="journal article" date="2008" name="J. Bacteriol.">
        <title>Complete genome sequence of Leuconostoc citreum KM20.</title>
        <authorList>
            <person name="Kim J.F."/>
            <person name="Jeong H."/>
            <person name="Lee J.-S."/>
            <person name="Choi S.-H."/>
            <person name="Ha M."/>
            <person name="Hur C.-G."/>
            <person name="Kim J.-S."/>
            <person name="Lee S."/>
            <person name="Park H.-S."/>
            <person name="Park Y.-H."/>
            <person name="Oh T.K."/>
        </authorList>
    </citation>
    <scope>NUCLEOTIDE SEQUENCE [LARGE SCALE GENOMIC DNA]</scope>
    <source>
        <strain>KM20</strain>
    </source>
</reference>
<comment type="function">
    <text evidence="1">Digests double-stranded RNA. Involved in the processing of primary rRNA transcript to yield the immediate precursors to the large and small rRNAs (23S and 16S). Processes some mRNAs, and tRNAs when they are encoded in the rRNA operon. Processes pre-crRNA and tracrRNA of type II CRISPR loci if present in the organism.</text>
</comment>
<comment type="catalytic activity">
    <reaction evidence="1">
        <text>Endonucleolytic cleavage to 5'-phosphomonoester.</text>
        <dbReference type="EC" id="3.1.26.3"/>
    </reaction>
</comment>
<comment type="cofactor">
    <cofactor evidence="1">
        <name>Mg(2+)</name>
        <dbReference type="ChEBI" id="CHEBI:18420"/>
    </cofactor>
</comment>
<comment type="subunit">
    <text evidence="1">Homodimer.</text>
</comment>
<comment type="subcellular location">
    <subcellularLocation>
        <location evidence="1">Cytoplasm</location>
    </subcellularLocation>
</comment>
<comment type="similarity">
    <text evidence="1">Belongs to the ribonuclease III family.</text>
</comment>
<protein>
    <recommendedName>
        <fullName evidence="1">Ribonuclease 3</fullName>
        <ecNumber evidence="1">3.1.26.3</ecNumber>
    </recommendedName>
    <alternativeName>
        <fullName evidence="1">Ribonuclease III</fullName>
        <shortName evidence="1">RNase III</shortName>
    </alternativeName>
</protein>
<gene>
    <name evidence="1" type="primary">rnc</name>
    <name type="ordered locus">LCK_01294</name>
</gene>
<sequence>MSQDSFKQYLLSEFNIQFNNETLLLEALTQRNYLNEHPDEPGRDYQRLEFLGDSVMQVSVAEYLFKRYPNWHEGQLTEMRIAMVQTRSFAHFSRVAHLNEGIRLGKGEEMSGARDRDSLLEDIWEAFIGALYLDQGFEAVRKFLDQTLFAAVDTDFFDRFIDFKSRLQEKLQKNGAVDIDYRTENEQQLSHNAQLFEASVSVDDHELARGTGKSIKDAEKAAARAALKLLEEK</sequence>
<evidence type="ECO:0000255" key="1">
    <source>
        <dbReference type="HAMAP-Rule" id="MF_00104"/>
    </source>
</evidence>